<keyword id="KW-0256">Endoplasmic reticulum</keyword>
<keyword id="KW-0472">Membrane</keyword>
<keyword id="KW-1185">Reference proteome</keyword>
<keyword id="KW-0808">Transferase</keyword>
<organism>
    <name type="scientific">Encephalitozoon cuniculi (strain GB-M1)</name>
    <name type="common">Microsporidian parasite</name>
    <dbReference type="NCBI Taxonomy" id="284813"/>
    <lineage>
        <taxon>Eukaryota</taxon>
        <taxon>Fungi</taxon>
        <taxon>Fungi incertae sedis</taxon>
        <taxon>Microsporidia</taxon>
        <taxon>Unikaryonidae</taxon>
        <taxon>Encephalitozoon</taxon>
    </lineage>
</organism>
<evidence type="ECO:0000250" key="1"/>
<evidence type="ECO:0000269" key="2">
    <source>
    </source>
</evidence>
<evidence type="ECO:0000305" key="3"/>
<sequence length="270" mass="31180">MIEGLKVKALICVVEIIENGINSIHAMGILLFALNILKKASVLVSRILCAWNGKLSSEYPRDPRSRLGIFKNMNIAFICDGNRRYARKLGLEDSFIKDKGLQKIYEFIEFGCFYGIKEISFFCFALSNFKRSPEEVNKLMGLVKQKIERPKEIGIRPKFRVYGRLDLLEEDVRKRLMDIEEESKNNTSIIVNIFFAYSAEDEITRGIQFNSHVDILIRTSNTKRLSNFMIRQVAKGTSVFFAKALWPELTTAHLFLILLKHRLENKYLLG</sequence>
<comment type="function">
    <text evidence="1">Cis-prenyl transferase that adds multiple copies of isopentenyl pyrophosphate (IPP) to farnesyl pyrophosphate (FPP) to produce dehydrodolichyl diphosphate (Dedol-PP).</text>
</comment>
<comment type="pathway">
    <text>Protein modification; protein glycosylation.</text>
</comment>
<comment type="subcellular location">
    <subcellularLocation>
        <location evidence="1">Endoplasmic reticulum membrane</location>
        <topology evidence="1">Peripheral membrane protein</topology>
    </subcellularLocation>
</comment>
<comment type="developmental stage">
    <text evidence="2">Expressed in late sporogonial stages.</text>
</comment>
<comment type="similarity">
    <text evidence="3">Belongs to the UPP synthase family.</text>
</comment>
<proteinExistence type="evidence at protein level"/>
<feature type="chain" id="PRO_0000382907" description="Dehydrodolichyl diphosphate synthase">
    <location>
        <begin position="1"/>
        <end position="270"/>
    </location>
</feature>
<name>RER2_ENCCU</name>
<dbReference type="EC" id="2.5.1.-"/>
<dbReference type="EMBL" id="AL590451">
    <property type="protein sequence ID" value="CAD27160.1"/>
    <property type="molecule type" value="Genomic_DNA"/>
</dbReference>
<dbReference type="RefSeq" id="XP_955741.1">
    <property type="nucleotide sequence ID" value="XM_950648.1"/>
</dbReference>
<dbReference type="SMR" id="Q8SQJ8"/>
<dbReference type="FunCoup" id="Q8SQJ8">
    <property type="interactions" value="151"/>
</dbReference>
<dbReference type="STRING" id="284813.Q8SQJ8"/>
<dbReference type="VEuPathDB" id="MicrosporidiaDB:ECU09_1870"/>
<dbReference type="HOGENOM" id="CLU_086428_0_0_1"/>
<dbReference type="InParanoid" id="Q8SQJ8"/>
<dbReference type="OMA" id="DFRAPHF"/>
<dbReference type="OrthoDB" id="4173905at2759"/>
<dbReference type="UniPathway" id="UPA00378"/>
<dbReference type="Proteomes" id="UP000000819">
    <property type="component" value="Chromosome IX"/>
</dbReference>
<dbReference type="GO" id="GO:0005789">
    <property type="term" value="C:endoplasmic reticulum membrane"/>
    <property type="evidence" value="ECO:0007669"/>
    <property type="project" value="UniProtKB-SubCell"/>
</dbReference>
<dbReference type="GO" id="GO:0045547">
    <property type="term" value="F:ditrans,polycis-polyprenyl diphosphate synthase [(2E,6E)-farnesyl diphosphate specific] activity"/>
    <property type="evidence" value="ECO:0007669"/>
    <property type="project" value="TreeGrafter"/>
</dbReference>
<dbReference type="GO" id="GO:0019408">
    <property type="term" value="P:dolichol biosynthetic process"/>
    <property type="evidence" value="ECO:0007669"/>
    <property type="project" value="UniProtKB-ARBA"/>
</dbReference>
<dbReference type="GO" id="GO:0006486">
    <property type="term" value="P:protein glycosylation"/>
    <property type="evidence" value="ECO:0007669"/>
    <property type="project" value="UniProtKB-UniPathway"/>
</dbReference>
<dbReference type="CDD" id="cd00475">
    <property type="entry name" value="Cis_IPPS"/>
    <property type="match status" value="1"/>
</dbReference>
<dbReference type="Gene3D" id="3.40.1180.10">
    <property type="entry name" value="Decaprenyl diphosphate synthase-like"/>
    <property type="match status" value="2"/>
</dbReference>
<dbReference type="InterPro" id="IPR001441">
    <property type="entry name" value="UPP_synth-like"/>
</dbReference>
<dbReference type="InterPro" id="IPR036424">
    <property type="entry name" value="UPP_synth-like_sf"/>
</dbReference>
<dbReference type="PANTHER" id="PTHR10291:SF43">
    <property type="entry name" value="DEHYDRODOLICHYL DIPHOSPHATE SYNTHASE COMPLEX SUBUNIT DHDDS"/>
    <property type="match status" value="1"/>
</dbReference>
<dbReference type="PANTHER" id="PTHR10291">
    <property type="entry name" value="DEHYDRODOLICHYL DIPHOSPHATE SYNTHASE FAMILY MEMBER"/>
    <property type="match status" value="1"/>
</dbReference>
<dbReference type="Pfam" id="PF01255">
    <property type="entry name" value="Prenyltransf"/>
    <property type="match status" value="2"/>
</dbReference>
<dbReference type="SUPFAM" id="SSF64005">
    <property type="entry name" value="Undecaprenyl diphosphate synthase"/>
    <property type="match status" value="1"/>
</dbReference>
<reference key="1">
    <citation type="journal article" date="2001" name="Nature">
        <title>Genome sequence and gene compaction of the eukaryote parasite Encephalitozoon cuniculi.</title>
        <authorList>
            <person name="Katinka M.D."/>
            <person name="Duprat S."/>
            <person name="Cornillot E."/>
            <person name="Metenier G."/>
            <person name="Thomarat F."/>
            <person name="Prensier G."/>
            <person name="Barbe V."/>
            <person name="Peyretaillade E."/>
            <person name="Brottier P."/>
            <person name="Wincker P."/>
            <person name="Delbac F."/>
            <person name="El Alaoui H."/>
            <person name="Peyret P."/>
            <person name="Saurin W."/>
            <person name="Gouy M."/>
            <person name="Weissenbach J."/>
            <person name="Vivares C.P."/>
        </authorList>
    </citation>
    <scope>NUCLEOTIDE SEQUENCE [LARGE SCALE GENOMIC DNA]</scope>
    <source>
        <strain>GB-M1</strain>
    </source>
</reference>
<reference key="2">
    <citation type="journal article" date="2006" name="Proteomics">
        <title>Proteomic analysis of the eukaryotic parasite Encephalitozoon cuniculi (microsporidia): a reference map for proteins expressed in late sporogonial stages.</title>
        <authorList>
            <person name="Brosson D."/>
            <person name="Kuhn L."/>
            <person name="Delbac F."/>
            <person name="Garin J."/>
            <person name="Vivares C.P."/>
            <person name="Texier C."/>
        </authorList>
    </citation>
    <scope>IDENTIFICATION BY MASS SPECTROMETRY [LARGE SCALE ANALYSIS]</scope>
    <scope>DEVELOPMENTAL STAGE</scope>
</reference>
<gene>
    <name type="primary">RER2</name>
    <name type="ordered locus">ECU09_1870</name>
</gene>
<protein>
    <recommendedName>
        <fullName>Dehydrodolichyl diphosphate synthase</fullName>
        <shortName>DEDOL-PP synthase</shortName>
        <ecNumber>2.5.1.-</ecNumber>
    </recommendedName>
</protein>
<accession>Q8SQJ8</accession>